<reference key="1">
    <citation type="journal article" date="2005" name="Nucleic Acids Res.">
        <title>Genome dynamics and diversity of Shigella species, the etiologic agents of bacillary dysentery.</title>
        <authorList>
            <person name="Yang F."/>
            <person name="Yang J."/>
            <person name="Zhang X."/>
            <person name="Chen L."/>
            <person name="Jiang Y."/>
            <person name="Yan Y."/>
            <person name="Tang X."/>
            <person name="Wang J."/>
            <person name="Xiong Z."/>
            <person name="Dong J."/>
            <person name="Xue Y."/>
            <person name="Zhu Y."/>
            <person name="Xu X."/>
            <person name="Sun L."/>
            <person name="Chen S."/>
            <person name="Nie H."/>
            <person name="Peng J."/>
            <person name="Xu J."/>
            <person name="Wang Y."/>
            <person name="Yuan Z."/>
            <person name="Wen Y."/>
            <person name="Yao Z."/>
            <person name="Shen Y."/>
            <person name="Qiang B."/>
            <person name="Hou Y."/>
            <person name="Yu J."/>
            <person name="Jin Q."/>
        </authorList>
    </citation>
    <scope>NUCLEOTIDE SEQUENCE [LARGE SCALE GENOMIC DNA]</scope>
    <source>
        <strain>Sd197</strain>
    </source>
</reference>
<proteinExistence type="inferred from homology"/>
<feature type="chain" id="PRO_0000319239" description="Formate-dependent phosphoribosylglycinamide formyltransferase">
    <location>
        <begin position="1"/>
        <end position="392"/>
    </location>
</feature>
<feature type="domain" description="ATP-grasp" evidence="1">
    <location>
        <begin position="119"/>
        <end position="308"/>
    </location>
</feature>
<feature type="binding site" evidence="1">
    <location>
        <begin position="22"/>
        <end position="23"/>
    </location>
    <ligand>
        <name>N(1)-(5-phospho-beta-D-ribosyl)glycinamide</name>
        <dbReference type="ChEBI" id="CHEBI:143788"/>
    </ligand>
</feature>
<feature type="binding site" evidence="1">
    <location>
        <position position="82"/>
    </location>
    <ligand>
        <name>N(1)-(5-phospho-beta-D-ribosyl)glycinamide</name>
        <dbReference type="ChEBI" id="CHEBI:143788"/>
    </ligand>
</feature>
<feature type="binding site" evidence="1">
    <location>
        <position position="114"/>
    </location>
    <ligand>
        <name>ATP</name>
        <dbReference type="ChEBI" id="CHEBI:30616"/>
    </ligand>
</feature>
<feature type="binding site" evidence="1">
    <location>
        <position position="155"/>
    </location>
    <ligand>
        <name>ATP</name>
        <dbReference type="ChEBI" id="CHEBI:30616"/>
    </ligand>
</feature>
<feature type="binding site" evidence="1">
    <location>
        <begin position="160"/>
        <end position="165"/>
    </location>
    <ligand>
        <name>ATP</name>
        <dbReference type="ChEBI" id="CHEBI:30616"/>
    </ligand>
</feature>
<feature type="binding site" evidence="1">
    <location>
        <begin position="195"/>
        <end position="198"/>
    </location>
    <ligand>
        <name>ATP</name>
        <dbReference type="ChEBI" id="CHEBI:30616"/>
    </ligand>
</feature>
<feature type="binding site" evidence="1">
    <location>
        <position position="203"/>
    </location>
    <ligand>
        <name>ATP</name>
        <dbReference type="ChEBI" id="CHEBI:30616"/>
    </ligand>
</feature>
<feature type="binding site" evidence="1">
    <location>
        <position position="267"/>
    </location>
    <ligand>
        <name>Mg(2+)</name>
        <dbReference type="ChEBI" id="CHEBI:18420"/>
    </ligand>
</feature>
<feature type="binding site" evidence="1">
    <location>
        <position position="279"/>
    </location>
    <ligand>
        <name>Mg(2+)</name>
        <dbReference type="ChEBI" id="CHEBI:18420"/>
    </ligand>
</feature>
<feature type="binding site" evidence="1">
    <location>
        <position position="286"/>
    </location>
    <ligand>
        <name>N(1)-(5-phospho-beta-D-ribosyl)glycinamide</name>
        <dbReference type="ChEBI" id="CHEBI:143788"/>
    </ligand>
</feature>
<feature type="binding site" evidence="1">
    <location>
        <position position="355"/>
    </location>
    <ligand>
        <name>N(1)-(5-phospho-beta-D-ribosyl)glycinamide</name>
        <dbReference type="ChEBI" id="CHEBI:143788"/>
    </ligand>
</feature>
<feature type="binding site" evidence="1">
    <location>
        <begin position="362"/>
        <end position="363"/>
    </location>
    <ligand>
        <name>N(1)-(5-phospho-beta-D-ribosyl)glycinamide</name>
        <dbReference type="ChEBI" id="CHEBI:143788"/>
    </ligand>
</feature>
<keyword id="KW-0067">ATP-binding</keyword>
<keyword id="KW-0436">Ligase</keyword>
<keyword id="KW-0460">Magnesium</keyword>
<keyword id="KW-0479">Metal-binding</keyword>
<keyword id="KW-0547">Nucleotide-binding</keyword>
<keyword id="KW-0658">Purine biosynthesis</keyword>
<keyword id="KW-1185">Reference proteome</keyword>
<sequence>MTLLGTALRPAATRVMLLGSGELGKEVAIECQRLGVEVIAVDRYADAPAMHVAHRSHVINMLDGDALRRVVELEKPHYIVPEIEAIATDMLIQLEEEGLNVVPCARATKLTMNREGIRRLAAEELQLPTSTYRFSDSESLFREAVAAIGYPCIVKPVMSSSGKGQTFIRSAEQLAQAWEYAQQGGRAGAGRVIVEGVVKFDFEITLLTVSAVDGVHFCAPVGHRQEDGDYRESWQPQQMSPLALERAQEIARKVVLALGGYGLFGVELFVCGDEVIFSEVSPRPHDTGMVTLISQDLSEFALHVRAFLGLPVGGIRQYGPAASAVILPQLTSQNVTFDNVQNAVGADLQIRLFGKPEIDGSRRLGVALATAESVVDAIERAKHAAGQVKVQG</sequence>
<comment type="function">
    <text evidence="1">Involved in the de novo purine biosynthesis. Catalyzes the transfer of formate to 5-phospho-ribosyl-glycinamide (GAR), producing 5-phospho-ribosyl-N-formylglycinamide (FGAR). Formate is provided by PurU via hydrolysis of 10-formyl-tetrahydrofolate.</text>
</comment>
<comment type="catalytic activity">
    <reaction evidence="1">
        <text>N(1)-(5-phospho-beta-D-ribosyl)glycinamide + formate + ATP = N(2)-formyl-N(1)-(5-phospho-beta-D-ribosyl)glycinamide + ADP + phosphate + H(+)</text>
        <dbReference type="Rhea" id="RHEA:24829"/>
        <dbReference type="ChEBI" id="CHEBI:15378"/>
        <dbReference type="ChEBI" id="CHEBI:15740"/>
        <dbReference type="ChEBI" id="CHEBI:30616"/>
        <dbReference type="ChEBI" id="CHEBI:43474"/>
        <dbReference type="ChEBI" id="CHEBI:143788"/>
        <dbReference type="ChEBI" id="CHEBI:147286"/>
        <dbReference type="ChEBI" id="CHEBI:456216"/>
        <dbReference type="EC" id="6.3.1.21"/>
    </reaction>
    <physiologicalReaction direction="left-to-right" evidence="1">
        <dbReference type="Rhea" id="RHEA:24830"/>
    </physiologicalReaction>
</comment>
<comment type="pathway">
    <text evidence="1">Purine metabolism; IMP biosynthesis via de novo pathway; N(2)-formyl-N(1)-(5-phospho-D-ribosyl)glycinamide from N(1)-(5-phospho-D-ribosyl)glycinamide (formate route): step 1/1.</text>
</comment>
<comment type="subunit">
    <text evidence="1">Homodimer.</text>
</comment>
<comment type="similarity">
    <text evidence="1">Belongs to the PurK/PurT family.</text>
</comment>
<evidence type="ECO:0000255" key="1">
    <source>
        <dbReference type="HAMAP-Rule" id="MF_01643"/>
    </source>
</evidence>
<protein>
    <recommendedName>
        <fullName evidence="1">Formate-dependent phosphoribosylglycinamide formyltransferase</fullName>
        <ecNumber evidence="1">6.3.1.21</ecNumber>
    </recommendedName>
    <alternativeName>
        <fullName evidence="1">5'-phosphoribosylglycinamide transformylase 2</fullName>
    </alternativeName>
    <alternativeName>
        <fullName evidence="1">Formate-dependent GAR transformylase</fullName>
    </alternativeName>
    <alternativeName>
        <fullName evidence="1">GAR transformylase 2</fullName>
        <shortName evidence="1">GART 2</shortName>
    </alternativeName>
    <alternativeName>
        <fullName evidence="1">Non-folate glycinamide ribonucleotide transformylase</fullName>
    </alternativeName>
    <alternativeName>
        <fullName evidence="1">Phosphoribosylglycinamide formyltransferase 2</fullName>
    </alternativeName>
</protein>
<gene>
    <name evidence="1" type="primary">purT</name>
    <name type="ordered locus">SDY_1135</name>
</gene>
<dbReference type="EC" id="6.3.1.21" evidence="1"/>
<dbReference type="EMBL" id="CP000034">
    <property type="protein sequence ID" value="ABB61292.1"/>
    <property type="molecule type" value="Genomic_DNA"/>
</dbReference>
<dbReference type="RefSeq" id="WP_000173490.1">
    <property type="nucleotide sequence ID" value="NC_007606.1"/>
</dbReference>
<dbReference type="RefSeq" id="YP_402783.1">
    <property type="nucleotide sequence ID" value="NC_007606.1"/>
</dbReference>
<dbReference type="SMR" id="Q32HB3"/>
<dbReference type="STRING" id="300267.SDY_1135"/>
<dbReference type="EnsemblBacteria" id="ABB61292">
    <property type="protein sequence ID" value="ABB61292"/>
    <property type="gene ID" value="SDY_1135"/>
</dbReference>
<dbReference type="KEGG" id="sdy:SDY_1135"/>
<dbReference type="PATRIC" id="fig|300267.13.peg.1337"/>
<dbReference type="HOGENOM" id="CLU_011534_1_3_6"/>
<dbReference type="UniPathway" id="UPA00074">
    <property type="reaction ID" value="UER00127"/>
</dbReference>
<dbReference type="Proteomes" id="UP000002716">
    <property type="component" value="Chromosome"/>
</dbReference>
<dbReference type="GO" id="GO:0005829">
    <property type="term" value="C:cytosol"/>
    <property type="evidence" value="ECO:0007669"/>
    <property type="project" value="TreeGrafter"/>
</dbReference>
<dbReference type="GO" id="GO:0005524">
    <property type="term" value="F:ATP binding"/>
    <property type="evidence" value="ECO:0007669"/>
    <property type="project" value="UniProtKB-UniRule"/>
</dbReference>
<dbReference type="GO" id="GO:0000287">
    <property type="term" value="F:magnesium ion binding"/>
    <property type="evidence" value="ECO:0007669"/>
    <property type="project" value="InterPro"/>
</dbReference>
<dbReference type="GO" id="GO:0043815">
    <property type="term" value="F:phosphoribosylglycinamide formyltransferase 2 activity"/>
    <property type="evidence" value="ECO:0007669"/>
    <property type="project" value="UniProtKB-UniRule"/>
</dbReference>
<dbReference type="GO" id="GO:0004644">
    <property type="term" value="F:phosphoribosylglycinamide formyltransferase activity"/>
    <property type="evidence" value="ECO:0007669"/>
    <property type="project" value="InterPro"/>
</dbReference>
<dbReference type="GO" id="GO:0006189">
    <property type="term" value="P:'de novo' IMP biosynthetic process"/>
    <property type="evidence" value="ECO:0007669"/>
    <property type="project" value="UniProtKB-UniRule"/>
</dbReference>
<dbReference type="FunFam" id="3.30.1490.20:FF:000013">
    <property type="entry name" value="Formate-dependent phosphoribosylglycinamide formyltransferase"/>
    <property type="match status" value="1"/>
</dbReference>
<dbReference type="FunFam" id="3.30.470.20:FF:000027">
    <property type="entry name" value="Formate-dependent phosphoribosylglycinamide formyltransferase"/>
    <property type="match status" value="1"/>
</dbReference>
<dbReference type="FunFam" id="3.40.50.20:FF:000007">
    <property type="entry name" value="Formate-dependent phosphoribosylglycinamide formyltransferase"/>
    <property type="match status" value="1"/>
</dbReference>
<dbReference type="Gene3D" id="3.40.50.20">
    <property type="match status" value="1"/>
</dbReference>
<dbReference type="Gene3D" id="3.30.1490.20">
    <property type="entry name" value="ATP-grasp fold, A domain"/>
    <property type="match status" value="1"/>
</dbReference>
<dbReference type="Gene3D" id="3.30.470.20">
    <property type="entry name" value="ATP-grasp fold, B domain"/>
    <property type="match status" value="1"/>
</dbReference>
<dbReference type="HAMAP" id="MF_01643">
    <property type="entry name" value="PurT"/>
    <property type="match status" value="1"/>
</dbReference>
<dbReference type="InterPro" id="IPR011761">
    <property type="entry name" value="ATP-grasp"/>
</dbReference>
<dbReference type="InterPro" id="IPR003135">
    <property type="entry name" value="ATP-grasp_carboxylate-amine"/>
</dbReference>
<dbReference type="InterPro" id="IPR013815">
    <property type="entry name" value="ATP_grasp_subdomain_1"/>
</dbReference>
<dbReference type="InterPro" id="IPR016185">
    <property type="entry name" value="PreATP-grasp_dom_sf"/>
</dbReference>
<dbReference type="InterPro" id="IPR005862">
    <property type="entry name" value="PurT"/>
</dbReference>
<dbReference type="InterPro" id="IPR054350">
    <property type="entry name" value="PurT/PurK_preATP-grasp"/>
</dbReference>
<dbReference type="InterPro" id="IPR048740">
    <property type="entry name" value="PurT_C"/>
</dbReference>
<dbReference type="InterPro" id="IPR011054">
    <property type="entry name" value="Rudment_hybrid_motif"/>
</dbReference>
<dbReference type="NCBIfam" id="NF006766">
    <property type="entry name" value="PRK09288.1"/>
    <property type="match status" value="1"/>
</dbReference>
<dbReference type="NCBIfam" id="TIGR01142">
    <property type="entry name" value="purT"/>
    <property type="match status" value="1"/>
</dbReference>
<dbReference type="PANTHER" id="PTHR43055">
    <property type="entry name" value="FORMATE-DEPENDENT PHOSPHORIBOSYLGLYCINAMIDE FORMYLTRANSFERASE"/>
    <property type="match status" value="1"/>
</dbReference>
<dbReference type="PANTHER" id="PTHR43055:SF1">
    <property type="entry name" value="FORMATE-DEPENDENT PHOSPHORIBOSYLGLYCINAMIDE FORMYLTRANSFERASE"/>
    <property type="match status" value="1"/>
</dbReference>
<dbReference type="Pfam" id="PF02222">
    <property type="entry name" value="ATP-grasp"/>
    <property type="match status" value="1"/>
</dbReference>
<dbReference type="Pfam" id="PF21244">
    <property type="entry name" value="PurT_C"/>
    <property type="match status" value="1"/>
</dbReference>
<dbReference type="Pfam" id="PF22660">
    <property type="entry name" value="RS_preATP-grasp-like"/>
    <property type="match status" value="1"/>
</dbReference>
<dbReference type="SUPFAM" id="SSF56059">
    <property type="entry name" value="Glutathione synthetase ATP-binding domain-like"/>
    <property type="match status" value="1"/>
</dbReference>
<dbReference type="SUPFAM" id="SSF52440">
    <property type="entry name" value="PreATP-grasp domain"/>
    <property type="match status" value="1"/>
</dbReference>
<dbReference type="SUPFAM" id="SSF51246">
    <property type="entry name" value="Rudiment single hybrid motif"/>
    <property type="match status" value="1"/>
</dbReference>
<dbReference type="PROSITE" id="PS50975">
    <property type="entry name" value="ATP_GRASP"/>
    <property type="match status" value="1"/>
</dbReference>
<accession>Q32HB3</accession>
<name>PURT_SHIDS</name>
<organism>
    <name type="scientific">Shigella dysenteriae serotype 1 (strain Sd197)</name>
    <dbReference type="NCBI Taxonomy" id="300267"/>
    <lineage>
        <taxon>Bacteria</taxon>
        <taxon>Pseudomonadati</taxon>
        <taxon>Pseudomonadota</taxon>
        <taxon>Gammaproteobacteria</taxon>
        <taxon>Enterobacterales</taxon>
        <taxon>Enterobacteriaceae</taxon>
        <taxon>Shigella</taxon>
    </lineage>
</organism>